<gene>
    <name evidence="1" type="primary">smg</name>
    <name type="ordered locus">COXBURSA331_A0087</name>
</gene>
<comment type="similarity">
    <text evidence="1">Belongs to the Smg family.</text>
</comment>
<dbReference type="EMBL" id="CP000890">
    <property type="protein sequence ID" value="ABX78334.1"/>
    <property type="molecule type" value="Genomic_DNA"/>
</dbReference>
<dbReference type="KEGG" id="cbs:COXBURSA331_A0087"/>
<dbReference type="HOGENOM" id="CLU_133242_0_0_6"/>
<dbReference type="HAMAP" id="MF_00598">
    <property type="entry name" value="Smg"/>
    <property type="match status" value="1"/>
</dbReference>
<dbReference type="InterPro" id="IPR007456">
    <property type="entry name" value="Smg"/>
</dbReference>
<dbReference type="PANTHER" id="PTHR38692">
    <property type="entry name" value="PROTEIN SMG"/>
    <property type="match status" value="1"/>
</dbReference>
<dbReference type="PANTHER" id="PTHR38692:SF1">
    <property type="entry name" value="PROTEIN SMG"/>
    <property type="match status" value="1"/>
</dbReference>
<dbReference type="Pfam" id="PF04361">
    <property type="entry name" value="DUF494"/>
    <property type="match status" value="1"/>
</dbReference>
<organism>
    <name type="scientific">Coxiella burnetii (strain RSA 331 / Henzerling II)</name>
    <dbReference type="NCBI Taxonomy" id="360115"/>
    <lineage>
        <taxon>Bacteria</taxon>
        <taxon>Pseudomonadati</taxon>
        <taxon>Pseudomonadota</taxon>
        <taxon>Gammaproteobacteria</taxon>
        <taxon>Legionellales</taxon>
        <taxon>Coxiellaceae</taxon>
        <taxon>Coxiella</taxon>
    </lineage>
</organism>
<accession>A9N9H2</accession>
<sequence>MKDESVLNVLMYLFKNHMQENCTLDLGEKKLLVQLEELGFHRTVIDQALSWLNNLSYSGREPMQLPQKNSFRVFSDYECDLLDTECRRFLITLEQQAILNPHTRELVINQALELSCEGIDVSLLKWVTLMVLFNQSSEKEALASMELLVLDDTVGGIH</sequence>
<proteinExistence type="inferred from homology"/>
<feature type="chain" id="PRO_1000082445" description="Protein Smg homolog">
    <location>
        <begin position="1"/>
        <end position="158"/>
    </location>
</feature>
<protein>
    <recommendedName>
        <fullName evidence="1">Protein Smg homolog</fullName>
    </recommendedName>
</protein>
<name>SMG_COXBR</name>
<evidence type="ECO:0000255" key="1">
    <source>
        <dbReference type="HAMAP-Rule" id="MF_00598"/>
    </source>
</evidence>
<reference key="1">
    <citation type="submission" date="2007-11" db="EMBL/GenBank/DDBJ databases">
        <title>Genome sequencing of phylogenetically and phenotypically diverse Coxiella burnetii isolates.</title>
        <authorList>
            <person name="Seshadri R."/>
            <person name="Samuel J.E."/>
        </authorList>
    </citation>
    <scope>NUCLEOTIDE SEQUENCE [LARGE SCALE GENOMIC DNA]</scope>
    <source>
        <strain>RSA 331 / Henzerling II</strain>
    </source>
</reference>